<feature type="chain" id="PRO_0000191466" description="Sperm protamine P1">
    <location>
        <begin position="1"/>
        <end position="62"/>
    </location>
</feature>
<feature type="region of interest" description="Disordered" evidence="1">
    <location>
        <begin position="1"/>
        <end position="62"/>
    </location>
</feature>
<protein>
    <recommendedName>
        <fullName>Sperm protamine P1</fullName>
    </recommendedName>
</protein>
<gene>
    <name type="primary">PRM1</name>
</gene>
<accession>P67849</accession>
<accession>P42130</accession>
<accession>P42146</accession>
<dbReference type="EMBL" id="AF010275">
    <property type="protein sequence ID" value="AAB69305.1"/>
    <property type="molecule type" value="Genomic_DNA"/>
</dbReference>
<dbReference type="GO" id="GO:0000786">
    <property type="term" value="C:nucleosome"/>
    <property type="evidence" value="ECO:0007669"/>
    <property type="project" value="UniProtKB-KW"/>
</dbReference>
<dbReference type="GO" id="GO:0005634">
    <property type="term" value="C:nucleus"/>
    <property type="evidence" value="ECO:0007669"/>
    <property type="project" value="UniProtKB-SubCell"/>
</dbReference>
<dbReference type="GO" id="GO:0003677">
    <property type="term" value="F:DNA binding"/>
    <property type="evidence" value="ECO:0007669"/>
    <property type="project" value="UniProtKB-KW"/>
</dbReference>
<dbReference type="GO" id="GO:0030261">
    <property type="term" value="P:chromosome condensation"/>
    <property type="evidence" value="ECO:0007669"/>
    <property type="project" value="UniProtKB-KW"/>
</dbReference>
<dbReference type="GO" id="GO:0035092">
    <property type="term" value="P:sperm DNA condensation"/>
    <property type="evidence" value="ECO:0007669"/>
    <property type="project" value="InterPro"/>
</dbReference>
<dbReference type="InterPro" id="IPR000221">
    <property type="entry name" value="Protamine_P1"/>
</dbReference>
<dbReference type="PROSITE" id="PS00048">
    <property type="entry name" value="PROTAMINE_P1"/>
    <property type="match status" value="1"/>
</dbReference>
<evidence type="ECO:0000256" key="1">
    <source>
        <dbReference type="SAM" id="MobiDB-lite"/>
    </source>
</evidence>
<evidence type="ECO:0000305" key="2"/>
<sequence>MARYRRHSRSRSRSRYRRRRRRRSRGRRRRTYRRSRRHSRRRRGRRRGYSRRRYSRRGRRRY</sequence>
<keyword id="KW-0158">Chromosome</keyword>
<keyword id="KW-0217">Developmental protein</keyword>
<keyword id="KW-0221">Differentiation</keyword>
<keyword id="KW-0226">DNA condensation</keyword>
<keyword id="KW-0238">DNA-binding</keyword>
<keyword id="KW-0544">Nucleosome core</keyword>
<keyword id="KW-0539">Nucleus</keyword>
<keyword id="KW-0744">Spermatogenesis</keyword>
<reference key="1">
    <citation type="journal article" date="1997" name="J. Mammal. Evol.">
        <title>Reconstructing the taxonomic radiation of dasyurine marsupials with cytochrome b, 12S rRNA, and protamine P1 gene trees.</title>
        <authorList>
            <person name="Krajewski C."/>
            <person name="Young J."/>
            <person name="Buckley L."/>
            <person name="Woolley P.A."/>
            <person name="Westerman M."/>
        </authorList>
    </citation>
    <scope>NUCLEOTIDE SEQUENCE [GENOMIC DNA]</scope>
</reference>
<name>HSP1_DASSP</name>
<comment type="function">
    <text>Protamines substitute for histones in the chromatin of sperm during the haploid phase of spermatogenesis. They compact sperm DNA into a highly condensed, stable and inactive complex.</text>
</comment>
<comment type="subcellular location">
    <subcellularLocation>
        <location>Nucleus</location>
    </subcellularLocation>
    <subcellularLocation>
        <location>Chromosome</location>
    </subcellularLocation>
</comment>
<comment type="tissue specificity">
    <text>Testis.</text>
</comment>
<comment type="similarity">
    <text evidence="2">Belongs to the protamine P1 family.</text>
</comment>
<organism>
    <name type="scientific">Dasyurus spartacus</name>
    <name type="common">Bronze quoll</name>
    <name type="synonym">Satanellus spartacus</name>
    <dbReference type="NCBI Taxonomy" id="32546"/>
    <lineage>
        <taxon>Eukaryota</taxon>
        <taxon>Metazoa</taxon>
        <taxon>Chordata</taxon>
        <taxon>Craniata</taxon>
        <taxon>Vertebrata</taxon>
        <taxon>Euteleostomi</taxon>
        <taxon>Mammalia</taxon>
        <taxon>Metatheria</taxon>
        <taxon>Dasyuromorphia</taxon>
        <taxon>Dasyuridae</taxon>
        <taxon>Dasyurus</taxon>
    </lineage>
</organism>
<proteinExistence type="evidence at transcript level"/>